<feature type="chain" id="PRO_0000150221" description="Phosphoserine aminotransferase">
    <location>
        <begin position="1"/>
        <end position="361"/>
    </location>
</feature>
<feature type="binding site" evidence="1">
    <location>
        <position position="42"/>
    </location>
    <ligand>
        <name>L-glutamate</name>
        <dbReference type="ChEBI" id="CHEBI:29985"/>
    </ligand>
</feature>
<feature type="binding site" evidence="1">
    <location>
        <begin position="76"/>
        <end position="77"/>
    </location>
    <ligand>
        <name>pyridoxal 5'-phosphate</name>
        <dbReference type="ChEBI" id="CHEBI:597326"/>
    </ligand>
</feature>
<feature type="binding site" evidence="1">
    <location>
        <position position="102"/>
    </location>
    <ligand>
        <name>pyridoxal 5'-phosphate</name>
        <dbReference type="ChEBI" id="CHEBI:597326"/>
    </ligand>
</feature>
<feature type="binding site" evidence="1">
    <location>
        <position position="152"/>
    </location>
    <ligand>
        <name>pyridoxal 5'-phosphate</name>
        <dbReference type="ChEBI" id="CHEBI:597326"/>
    </ligand>
</feature>
<feature type="binding site" evidence="1">
    <location>
        <position position="172"/>
    </location>
    <ligand>
        <name>pyridoxal 5'-phosphate</name>
        <dbReference type="ChEBI" id="CHEBI:597326"/>
    </ligand>
</feature>
<feature type="binding site" evidence="1">
    <location>
        <position position="195"/>
    </location>
    <ligand>
        <name>pyridoxal 5'-phosphate</name>
        <dbReference type="ChEBI" id="CHEBI:597326"/>
    </ligand>
</feature>
<feature type="binding site" evidence="1">
    <location>
        <begin position="237"/>
        <end position="238"/>
    </location>
    <ligand>
        <name>pyridoxal 5'-phosphate</name>
        <dbReference type="ChEBI" id="CHEBI:597326"/>
    </ligand>
</feature>
<feature type="modified residue" description="N6-(pyridoxal phosphate)lysine" evidence="1">
    <location>
        <position position="196"/>
    </location>
</feature>
<keyword id="KW-0028">Amino-acid biosynthesis</keyword>
<keyword id="KW-0032">Aminotransferase</keyword>
<keyword id="KW-0963">Cytoplasm</keyword>
<keyword id="KW-0663">Pyridoxal phosphate</keyword>
<keyword id="KW-0664">Pyridoxine biosynthesis</keyword>
<keyword id="KW-1185">Reference proteome</keyword>
<keyword id="KW-0718">Serine biosynthesis</keyword>
<keyword id="KW-0808">Transferase</keyword>
<comment type="function">
    <text evidence="1">Catalyzes the reversible conversion of 3-phosphohydroxypyruvate to phosphoserine and of 3-hydroxy-2-oxo-4-phosphonooxybutanoate to phosphohydroxythreonine.</text>
</comment>
<comment type="catalytic activity">
    <reaction evidence="1">
        <text>O-phospho-L-serine + 2-oxoglutarate = 3-phosphooxypyruvate + L-glutamate</text>
        <dbReference type="Rhea" id="RHEA:14329"/>
        <dbReference type="ChEBI" id="CHEBI:16810"/>
        <dbReference type="ChEBI" id="CHEBI:18110"/>
        <dbReference type="ChEBI" id="CHEBI:29985"/>
        <dbReference type="ChEBI" id="CHEBI:57524"/>
        <dbReference type="EC" id="2.6.1.52"/>
    </reaction>
</comment>
<comment type="catalytic activity">
    <reaction evidence="1">
        <text>4-(phosphooxy)-L-threonine + 2-oxoglutarate = (R)-3-hydroxy-2-oxo-4-phosphooxybutanoate + L-glutamate</text>
        <dbReference type="Rhea" id="RHEA:16573"/>
        <dbReference type="ChEBI" id="CHEBI:16810"/>
        <dbReference type="ChEBI" id="CHEBI:29985"/>
        <dbReference type="ChEBI" id="CHEBI:58452"/>
        <dbReference type="ChEBI" id="CHEBI:58538"/>
        <dbReference type="EC" id="2.6.1.52"/>
    </reaction>
</comment>
<comment type="cofactor">
    <cofactor evidence="1">
        <name>pyridoxal 5'-phosphate</name>
        <dbReference type="ChEBI" id="CHEBI:597326"/>
    </cofactor>
    <text evidence="1">Binds 1 pyridoxal phosphate per subunit.</text>
</comment>
<comment type="pathway">
    <text evidence="1">Amino-acid biosynthesis; L-serine biosynthesis; L-serine from 3-phospho-D-glycerate: step 2/3.</text>
</comment>
<comment type="pathway">
    <text evidence="1">Cofactor biosynthesis; pyridoxine 5'-phosphate biosynthesis; pyridoxine 5'-phosphate from D-erythrose 4-phosphate: step 3/5.</text>
</comment>
<comment type="subunit">
    <text evidence="1">Homodimer.</text>
</comment>
<comment type="subcellular location">
    <subcellularLocation>
        <location evidence="1">Cytoplasm</location>
    </subcellularLocation>
</comment>
<comment type="similarity">
    <text evidence="1">Belongs to the class-V pyridoxal-phosphate-dependent aminotransferase family. SerC subfamily.</text>
</comment>
<sequence>MTRAFNFSAGPATLPESVLRQAQEEMVEWNGVGASIVEISHRSADFMAVAAAAEADLRTLLSIPDDYAVLFTSGGATTIQALLPLNFAAPGQAVDYVVSGHWGKTAIKQATPYVDVRVAADGQPGGYVDIPPVASWTLSPHAAYVHITANETIHGVEFRDTPDVGTLPLFADFSSSIASEPLDIRRYGLIYAGAQKNLGPVGISVVIVRRELLERAGQPRADIFNYASHVARDSMLNTPPTWNWYLLGLTVKWMLEQGGVAAFAQRNAEKAALVYGAIDGSGGFYRNQVMPTVRSRMNIPFFLGDEQLDALFVSESKAAGLLALKGHKAVGGIRASLYNAMPVAGAQALVAFMHDFQQRHG</sequence>
<organism>
    <name type="scientific">Xanthomonas campestris pv. campestris (strain ATCC 33913 / DSM 3586 / NCPPB 528 / LMG 568 / P 25)</name>
    <dbReference type="NCBI Taxonomy" id="190485"/>
    <lineage>
        <taxon>Bacteria</taxon>
        <taxon>Pseudomonadati</taxon>
        <taxon>Pseudomonadota</taxon>
        <taxon>Gammaproteobacteria</taxon>
        <taxon>Lysobacterales</taxon>
        <taxon>Lysobacteraceae</taxon>
        <taxon>Xanthomonas</taxon>
    </lineage>
</organism>
<dbReference type="EC" id="2.6.1.52" evidence="1"/>
<dbReference type="EMBL" id="AE008922">
    <property type="protein sequence ID" value="AAM40884.1"/>
    <property type="molecule type" value="Genomic_DNA"/>
</dbReference>
<dbReference type="RefSeq" id="NP_636960.1">
    <property type="nucleotide sequence ID" value="NC_003902.1"/>
</dbReference>
<dbReference type="RefSeq" id="WP_011036771.1">
    <property type="nucleotide sequence ID" value="NC_003902.1"/>
</dbReference>
<dbReference type="SMR" id="Q8PA97"/>
<dbReference type="STRING" id="190485.XCC1589"/>
<dbReference type="EnsemblBacteria" id="AAM40884">
    <property type="protein sequence ID" value="AAM40884"/>
    <property type="gene ID" value="XCC1589"/>
</dbReference>
<dbReference type="KEGG" id="xcc:XCC1589"/>
<dbReference type="PATRIC" id="fig|190485.4.peg.1702"/>
<dbReference type="eggNOG" id="COG1932">
    <property type="taxonomic scope" value="Bacteria"/>
</dbReference>
<dbReference type="HOGENOM" id="CLU_034866_0_2_6"/>
<dbReference type="OrthoDB" id="9809412at2"/>
<dbReference type="UniPathway" id="UPA00135">
    <property type="reaction ID" value="UER00197"/>
</dbReference>
<dbReference type="UniPathway" id="UPA00244">
    <property type="reaction ID" value="UER00311"/>
</dbReference>
<dbReference type="Proteomes" id="UP000001010">
    <property type="component" value="Chromosome"/>
</dbReference>
<dbReference type="GO" id="GO:0005737">
    <property type="term" value="C:cytoplasm"/>
    <property type="evidence" value="ECO:0000318"/>
    <property type="project" value="GO_Central"/>
</dbReference>
<dbReference type="GO" id="GO:0004648">
    <property type="term" value="F:O-phospho-L-serine:2-oxoglutarate aminotransferase activity"/>
    <property type="evidence" value="ECO:0000318"/>
    <property type="project" value="GO_Central"/>
</dbReference>
<dbReference type="GO" id="GO:0030170">
    <property type="term" value="F:pyridoxal phosphate binding"/>
    <property type="evidence" value="ECO:0000318"/>
    <property type="project" value="GO_Central"/>
</dbReference>
<dbReference type="GO" id="GO:0006564">
    <property type="term" value="P:L-serine biosynthetic process"/>
    <property type="evidence" value="ECO:0000318"/>
    <property type="project" value="GO_Central"/>
</dbReference>
<dbReference type="GO" id="GO:0008615">
    <property type="term" value="P:pyridoxine biosynthetic process"/>
    <property type="evidence" value="ECO:0007669"/>
    <property type="project" value="UniProtKB-UniRule"/>
</dbReference>
<dbReference type="FunFam" id="3.40.640.10:FF:000010">
    <property type="entry name" value="Phosphoserine aminotransferase"/>
    <property type="match status" value="1"/>
</dbReference>
<dbReference type="FunFam" id="3.90.1150.10:FF:000006">
    <property type="entry name" value="Phosphoserine aminotransferase"/>
    <property type="match status" value="1"/>
</dbReference>
<dbReference type="Gene3D" id="3.90.1150.10">
    <property type="entry name" value="Aspartate Aminotransferase, domain 1"/>
    <property type="match status" value="1"/>
</dbReference>
<dbReference type="Gene3D" id="3.40.640.10">
    <property type="entry name" value="Type I PLP-dependent aspartate aminotransferase-like (Major domain)"/>
    <property type="match status" value="1"/>
</dbReference>
<dbReference type="HAMAP" id="MF_00160">
    <property type="entry name" value="SerC_aminotrans_5"/>
    <property type="match status" value="1"/>
</dbReference>
<dbReference type="InterPro" id="IPR000192">
    <property type="entry name" value="Aminotrans_V_dom"/>
</dbReference>
<dbReference type="InterPro" id="IPR020578">
    <property type="entry name" value="Aminotrans_V_PyrdxlP_BS"/>
</dbReference>
<dbReference type="InterPro" id="IPR022278">
    <property type="entry name" value="Pser_aminoTfrase"/>
</dbReference>
<dbReference type="InterPro" id="IPR015424">
    <property type="entry name" value="PyrdxlP-dep_Trfase"/>
</dbReference>
<dbReference type="InterPro" id="IPR015421">
    <property type="entry name" value="PyrdxlP-dep_Trfase_major"/>
</dbReference>
<dbReference type="InterPro" id="IPR015422">
    <property type="entry name" value="PyrdxlP-dep_Trfase_small"/>
</dbReference>
<dbReference type="NCBIfam" id="NF003764">
    <property type="entry name" value="PRK05355.1"/>
    <property type="match status" value="1"/>
</dbReference>
<dbReference type="NCBIfam" id="TIGR01364">
    <property type="entry name" value="serC_1"/>
    <property type="match status" value="1"/>
</dbReference>
<dbReference type="PANTHER" id="PTHR43247">
    <property type="entry name" value="PHOSPHOSERINE AMINOTRANSFERASE"/>
    <property type="match status" value="1"/>
</dbReference>
<dbReference type="PANTHER" id="PTHR43247:SF1">
    <property type="entry name" value="PHOSPHOSERINE AMINOTRANSFERASE"/>
    <property type="match status" value="1"/>
</dbReference>
<dbReference type="Pfam" id="PF00266">
    <property type="entry name" value="Aminotran_5"/>
    <property type="match status" value="1"/>
</dbReference>
<dbReference type="PIRSF" id="PIRSF000525">
    <property type="entry name" value="SerC"/>
    <property type="match status" value="1"/>
</dbReference>
<dbReference type="SUPFAM" id="SSF53383">
    <property type="entry name" value="PLP-dependent transferases"/>
    <property type="match status" value="1"/>
</dbReference>
<dbReference type="PROSITE" id="PS00595">
    <property type="entry name" value="AA_TRANSFER_CLASS_5"/>
    <property type="match status" value="1"/>
</dbReference>
<reference key="1">
    <citation type="journal article" date="2002" name="Nature">
        <title>Comparison of the genomes of two Xanthomonas pathogens with differing host specificities.</title>
        <authorList>
            <person name="da Silva A.C.R."/>
            <person name="Ferro J.A."/>
            <person name="Reinach F.C."/>
            <person name="Farah C.S."/>
            <person name="Furlan L.R."/>
            <person name="Quaggio R.B."/>
            <person name="Monteiro-Vitorello C.B."/>
            <person name="Van Sluys M.A."/>
            <person name="Almeida N.F. Jr."/>
            <person name="Alves L.M.C."/>
            <person name="do Amaral A.M."/>
            <person name="Bertolini M.C."/>
            <person name="Camargo L.E.A."/>
            <person name="Camarotte G."/>
            <person name="Cannavan F."/>
            <person name="Cardozo J."/>
            <person name="Chambergo F."/>
            <person name="Ciapina L.P."/>
            <person name="Cicarelli R.M.B."/>
            <person name="Coutinho L.L."/>
            <person name="Cursino-Santos J.R."/>
            <person name="El-Dorry H."/>
            <person name="Faria J.B."/>
            <person name="Ferreira A.J.S."/>
            <person name="Ferreira R.C.C."/>
            <person name="Ferro M.I.T."/>
            <person name="Formighieri E.F."/>
            <person name="Franco M.C."/>
            <person name="Greggio C.C."/>
            <person name="Gruber A."/>
            <person name="Katsuyama A.M."/>
            <person name="Kishi L.T."/>
            <person name="Leite R.P."/>
            <person name="Lemos E.G.M."/>
            <person name="Lemos M.V.F."/>
            <person name="Locali E.C."/>
            <person name="Machado M.A."/>
            <person name="Madeira A.M.B.N."/>
            <person name="Martinez-Rossi N.M."/>
            <person name="Martins E.C."/>
            <person name="Meidanis J."/>
            <person name="Menck C.F.M."/>
            <person name="Miyaki C.Y."/>
            <person name="Moon D.H."/>
            <person name="Moreira L.M."/>
            <person name="Novo M.T.M."/>
            <person name="Okura V.K."/>
            <person name="Oliveira M.C."/>
            <person name="Oliveira V.R."/>
            <person name="Pereira H.A."/>
            <person name="Rossi A."/>
            <person name="Sena J.A.D."/>
            <person name="Silva C."/>
            <person name="de Souza R.F."/>
            <person name="Spinola L.A.F."/>
            <person name="Takita M.A."/>
            <person name="Tamura R.E."/>
            <person name="Teixeira E.C."/>
            <person name="Tezza R.I.D."/>
            <person name="Trindade dos Santos M."/>
            <person name="Truffi D."/>
            <person name="Tsai S.M."/>
            <person name="White F.F."/>
            <person name="Setubal J.C."/>
            <person name="Kitajima J.P."/>
        </authorList>
    </citation>
    <scope>NUCLEOTIDE SEQUENCE [LARGE SCALE GENOMIC DNA]</scope>
    <source>
        <strain>ATCC 33913 / DSM 3586 / NCPPB 528 / LMG 568 / P 25</strain>
    </source>
</reference>
<gene>
    <name evidence="1" type="primary">serC</name>
    <name type="ordered locus">XCC1589</name>
</gene>
<protein>
    <recommendedName>
        <fullName evidence="1">Phosphoserine aminotransferase</fullName>
        <ecNumber evidence="1">2.6.1.52</ecNumber>
    </recommendedName>
    <alternativeName>
        <fullName evidence="1">Phosphohydroxythreonine aminotransferase</fullName>
        <shortName evidence="1">PSAT</shortName>
    </alternativeName>
</protein>
<name>SERC_XANCP</name>
<accession>Q8PA97</accession>
<proteinExistence type="inferred from homology"/>
<evidence type="ECO:0000255" key="1">
    <source>
        <dbReference type="HAMAP-Rule" id="MF_00160"/>
    </source>
</evidence>